<evidence type="ECO:0000250" key="1"/>
<evidence type="ECO:0000255" key="2"/>
<evidence type="ECO:0000255" key="3">
    <source>
        <dbReference type="PROSITE-ProRule" id="PRU00066"/>
    </source>
</evidence>
<evidence type="ECO:0000255" key="4">
    <source>
        <dbReference type="PROSITE-ProRule" id="PRU00135"/>
    </source>
</evidence>
<evidence type="ECO:0000255" key="5">
    <source>
        <dbReference type="PROSITE-ProRule" id="PRU00159"/>
    </source>
</evidence>
<evidence type="ECO:0000255" key="6">
    <source>
        <dbReference type="PROSITE-ProRule" id="PRU00168"/>
    </source>
</evidence>
<evidence type="ECO:0000255" key="7">
    <source>
        <dbReference type="PROSITE-ProRule" id="PRU00758"/>
    </source>
</evidence>
<evidence type="ECO:0000255" key="8">
    <source>
        <dbReference type="PROSITE-ProRule" id="PRU10027"/>
    </source>
</evidence>
<evidence type="ECO:0000256" key="9">
    <source>
        <dbReference type="SAM" id="MobiDB-lite"/>
    </source>
</evidence>
<evidence type="ECO:0000269" key="10">
    <source>
    </source>
</evidence>
<evidence type="ECO:0000269" key="11">
    <source>
    </source>
</evidence>
<evidence type="ECO:0000269" key="12">
    <source>
    </source>
</evidence>
<evidence type="ECO:0000269" key="13">
    <source>
    </source>
</evidence>
<evidence type="ECO:0000269" key="14">
    <source>
    </source>
</evidence>
<evidence type="ECO:0000269" key="15">
    <source>
    </source>
</evidence>
<evidence type="ECO:0000269" key="16">
    <source>
    </source>
</evidence>
<evidence type="ECO:0000305" key="17"/>
<protein>
    <recommendedName>
        <fullName>Cyclic GMP-binding protein C</fullName>
        <ecNumber>2.7.11.1</ecNumber>
    </recommendedName>
    <alternativeName>
        <fullName>Ras guanine nucleotide exchange factor T</fullName>
    </alternativeName>
    <alternativeName>
        <fullName>RasGEF domain-containing protein T</fullName>
    </alternativeName>
</protein>
<comment type="function">
    <text evidence="1 11 12 14 15 16">Promotes the exchange of Ras-bound GDP by GTP (By similarity). Required for cyclic GMP-mediated chemotaxis, polarity. Plays a key role in cyclic AMP-induced myosin II translocation to the cortex. Also involved in the phosphorylation of mlkA and mlcR, either directly or via an intermediate kinase.</text>
</comment>
<comment type="catalytic activity">
    <reaction>
        <text>L-seryl-[protein] + ATP = O-phospho-L-seryl-[protein] + ADP + H(+)</text>
        <dbReference type="Rhea" id="RHEA:17989"/>
        <dbReference type="Rhea" id="RHEA-COMP:9863"/>
        <dbReference type="Rhea" id="RHEA-COMP:11604"/>
        <dbReference type="ChEBI" id="CHEBI:15378"/>
        <dbReference type="ChEBI" id="CHEBI:29999"/>
        <dbReference type="ChEBI" id="CHEBI:30616"/>
        <dbReference type="ChEBI" id="CHEBI:83421"/>
        <dbReference type="ChEBI" id="CHEBI:456216"/>
        <dbReference type="EC" id="2.7.11.1"/>
    </reaction>
</comment>
<comment type="catalytic activity">
    <reaction>
        <text>L-threonyl-[protein] + ATP = O-phospho-L-threonyl-[protein] + ADP + H(+)</text>
        <dbReference type="Rhea" id="RHEA:46608"/>
        <dbReference type="Rhea" id="RHEA-COMP:11060"/>
        <dbReference type="Rhea" id="RHEA-COMP:11605"/>
        <dbReference type="ChEBI" id="CHEBI:15378"/>
        <dbReference type="ChEBI" id="CHEBI:30013"/>
        <dbReference type="ChEBI" id="CHEBI:30616"/>
        <dbReference type="ChEBI" id="CHEBI:61977"/>
        <dbReference type="ChEBI" id="CHEBI:456216"/>
        <dbReference type="EC" id="2.7.11.1"/>
    </reaction>
</comment>
<comment type="developmental stage">
    <text evidence="10 13">Increases dramatically after starvation is initiated with a peak between 4-12 hours.</text>
</comment>
<comment type="similarity">
    <text evidence="17">Belongs to the protein kinase superfamily. TKL Ser/Thr protein kinase family. ROCO subfamily.</text>
</comment>
<feature type="chain" id="PRO_0000353103" description="Cyclic GMP-binding protein C">
    <location>
        <begin position="1"/>
        <end position="2631"/>
    </location>
</feature>
<feature type="repeat" description="LRR 1">
    <location>
        <begin position="170"/>
        <end position="194"/>
    </location>
</feature>
<feature type="repeat" description="LRR 2">
    <location>
        <begin position="196"/>
        <end position="217"/>
    </location>
</feature>
<feature type="repeat" description="LRR 3">
    <location>
        <begin position="218"/>
        <end position="240"/>
    </location>
</feature>
<feature type="repeat" description="LRR 4">
    <location>
        <begin position="242"/>
        <end position="262"/>
    </location>
</feature>
<feature type="repeat" description="LRR 5">
    <location>
        <begin position="263"/>
        <end position="285"/>
    </location>
</feature>
<feature type="repeat" description="LRR 6">
    <location>
        <begin position="287"/>
        <end position="308"/>
    </location>
</feature>
<feature type="domain" description="Roc" evidence="7">
    <location>
        <begin position="323"/>
        <end position="515"/>
    </location>
</feature>
<feature type="domain" description="COR" evidence="2">
    <location>
        <begin position="523"/>
        <end position="741"/>
    </location>
</feature>
<feature type="domain" description="Protein kinase" evidence="5">
    <location>
        <begin position="878"/>
        <end position="1172"/>
    </location>
</feature>
<feature type="domain" description="N-terminal Ras-GEF" evidence="4">
    <location>
        <begin position="1366"/>
        <end position="1539"/>
    </location>
</feature>
<feature type="domain" description="DEP" evidence="3">
    <location>
        <begin position="1620"/>
        <end position="1706"/>
    </location>
</feature>
<feature type="domain" description="Ras-GEF" evidence="6">
    <location>
        <begin position="1708"/>
        <end position="1971"/>
    </location>
</feature>
<feature type="domain" description="GRAM">
    <location>
        <begin position="2354"/>
        <end position="2414"/>
    </location>
</feature>
<feature type="region of interest" description="Disordered" evidence="9">
    <location>
        <begin position="1225"/>
        <end position="1263"/>
    </location>
</feature>
<feature type="region of interest" description="Disordered" evidence="9">
    <location>
        <begin position="1387"/>
        <end position="1418"/>
    </location>
</feature>
<feature type="region of interest" description="Disordered" evidence="9">
    <location>
        <begin position="1989"/>
        <end position="2013"/>
    </location>
</feature>
<feature type="region of interest" description="Disordered" evidence="9">
    <location>
        <begin position="2142"/>
        <end position="2180"/>
    </location>
</feature>
<feature type="region of interest" description="Disordered" evidence="9">
    <location>
        <begin position="2192"/>
        <end position="2239"/>
    </location>
</feature>
<feature type="region of interest" description="Disordered" evidence="9">
    <location>
        <begin position="2263"/>
        <end position="2346"/>
    </location>
</feature>
<feature type="compositionally biased region" description="Polar residues" evidence="9">
    <location>
        <begin position="1225"/>
        <end position="1250"/>
    </location>
</feature>
<feature type="compositionally biased region" description="Low complexity" evidence="9">
    <location>
        <begin position="1251"/>
        <end position="1263"/>
    </location>
</feature>
<feature type="compositionally biased region" description="Basic and acidic residues" evidence="9">
    <location>
        <begin position="1392"/>
        <end position="1404"/>
    </location>
</feature>
<feature type="compositionally biased region" description="Low complexity" evidence="9">
    <location>
        <begin position="2144"/>
        <end position="2174"/>
    </location>
</feature>
<feature type="compositionally biased region" description="Pro residues" evidence="9">
    <location>
        <begin position="2212"/>
        <end position="2221"/>
    </location>
</feature>
<feature type="compositionally biased region" description="Low complexity" evidence="9">
    <location>
        <begin position="2222"/>
        <end position="2238"/>
    </location>
</feature>
<feature type="compositionally biased region" description="Basic and acidic residues" evidence="9">
    <location>
        <begin position="2287"/>
        <end position="2299"/>
    </location>
</feature>
<feature type="compositionally biased region" description="Polar residues" evidence="9">
    <location>
        <begin position="2321"/>
        <end position="2336"/>
    </location>
</feature>
<feature type="active site" description="Proton acceptor" evidence="5 8">
    <location>
        <position position="1023"/>
    </location>
</feature>
<feature type="binding site" evidence="7">
    <location>
        <begin position="336"/>
        <end position="343"/>
    </location>
    <ligand>
        <name>GTP</name>
        <dbReference type="ChEBI" id="CHEBI:37565"/>
    </ligand>
</feature>
<feature type="binding site" evidence="7">
    <location>
        <begin position="402"/>
        <end position="406"/>
    </location>
    <ligand>
        <name>GTP</name>
        <dbReference type="ChEBI" id="CHEBI:37565"/>
    </ligand>
</feature>
<feature type="binding site" evidence="7">
    <location>
        <begin position="458"/>
        <end position="461"/>
    </location>
    <ligand>
        <name>GTP</name>
        <dbReference type="ChEBI" id="CHEBI:37565"/>
    </ligand>
</feature>
<feature type="binding site" evidence="5">
    <location>
        <begin position="884"/>
        <end position="892"/>
    </location>
    <ligand>
        <name>ATP</name>
        <dbReference type="ChEBI" id="CHEBI:30616"/>
    </ligand>
</feature>
<feature type="binding site" evidence="5">
    <location>
        <position position="905"/>
    </location>
    <ligand>
        <name>ATP</name>
        <dbReference type="ChEBI" id="CHEBI:30616"/>
    </ligand>
</feature>
<feature type="binding site">
    <location>
        <begin position="2014"/>
        <end position="2133"/>
    </location>
    <ligand>
        <name>a nucleoside 3',5'-cyclic phosphate</name>
        <dbReference type="ChEBI" id="CHEBI:58464"/>
        <label>1</label>
    </ligand>
</feature>
<feature type="binding site">
    <location>
        <begin position="2490"/>
        <end position="2616"/>
    </location>
    <ligand>
        <name>a nucleoside 3',5'-cyclic phosphate</name>
        <dbReference type="ChEBI" id="CHEBI:58464"/>
        <label>2</label>
    </ligand>
</feature>
<feature type="mutagenesis site" description="Loss of nucleotide binding activity." evidence="16">
    <original>K</original>
    <variation>N</variation>
    <location>
        <position position="342"/>
    </location>
</feature>
<feature type="mutagenesis site" description="Loss of chemotax." evidence="16">
    <original>K</original>
    <variation>N</variation>
    <location>
        <position position="905"/>
    </location>
</feature>
<name>GBPC_DICDI</name>
<proteinExistence type="evidence at protein level"/>
<organism>
    <name type="scientific">Dictyostelium discoideum</name>
    <name type="common">Social amoeba</name>
    <dbReference type="NCBI Taxonomy" id="44689"/>
    <lineage>
        <taxon>Eukaryota</taxon>
        <taxon>Amoebozoa</taxon>
        <taxon>Evosea</taxon>
        <taxon>Eumycetozoa</taxon>
        <taxon>Dictyostelia</taxon>
        <taxon>Dictyosteliales</taxon>
        <taxon>Dictyosteliaceae</taxon>
        <taxon>Dictyostelium</taxon>
    </lineage>
</organism>
<keyword id="KW-0067">ATP-binding</keyword>
<keyword id="KW-0140">cGMP</keyword>
<keyword id="KW-0142">cGMP-binding</keyword>
<keyword id="KW-0342">GTP-binding</keyword>
<keyword id="KW-0344">Guanine-nucleotide releasing factor</keyword>
<keyword id="KW-0418">Kinase</keyword>
<keyword id="KW-0433">Leucine-rich repeat</keyword>
<keyword id="KW-0547">Nucleotide-binding</keyword>
<keyword id="KW-1185">Reference proteome</keyword>
<keyword id="KW-0677">Repeat</keyword>
<keyword id="KW-0723">Serine/threonine-protein kinase</keyword>
<keyword id="KW-0808">Transferase</keyword>
<reference key="1">
    <citation type="journal article" date="2002" name="Proc. Natl. Acad. Sci. U.S.A.">
        <title>Identification of four candidate cGMP targets in Dictyostelium.</title>
        <authorList>
            <person name="Goldberg J.M."/>
            <person name="Bosgraaf L."/>
            <person name="Van Haastert P.J.M."/>
            <person name="Smith J.L."/>
        </authorList>
    </citation>
    <scope>NUCLEOTIDE SEQUENCE [GENOMIC DNA]</scope>
    <scope>DEVELOPMENTAL STAGE</scope>
</reference>
<reference key="2">
    <citation type="journal article" date="2005" name="Nature">
        <title>The genome of the social amoeba Dictyostelium discoideum.</title>
        <authorList>
            <person name="Eichinger L."/>
            <person name="Pachebat J.A."/>
            <person name="Gloeckner G."/>
            <person name="Rajandream M.A."/>
            <person name="Sucgang R."/>
            <person name="Berriman M."/>
            <person name="Song J."/>
            <person name="Olsen R."/>
            <person name="Szafranski K."/>
            <person name="Xu Q."/>
            <person name="Tunggal B."/>
            <person name="Kummerfeld S."/>
            <person name="Madera M."/>
            <person name="Konfortov B.A."/>
            <person name="Rivero F."/>
            <person name="Bankier A.T."/>
            <person name="Lehmann R."/>
            <person name="Hamlin N."/>
            <person name="Davies R."/>
            <person name="Gaudet P."/>
            <person name="Fey P."/>
            <person name="Pilcher K."/>
            <person name="Chen G."/>
            <person name="Saunders D."/>
            <person name="Sodergren E.J."/>
            <person name="Davis P."/>
            <person name="Kerhornou A."/>
            <person name="Nie X."/>
            <person name="Hall N."/>
            <person name="Anjard C."/>
            <person name="Hemphill L."/>
            <person name="Bason N."/>
            <person name="Farbrother P."/>
            <person name="Desany B."/>
            <person name="Just E."/>
            <person name="Morio T."/>
            <person name="Rost R."/>
            <person name="Churcher C.M."/>
            <person name="Cooper J."/>
            <person name="Haydock S."/>
            <person name="van Driessche N."/>
            <person name="Cronin A."/>
            <person name="Goodhead I."/>
            <person name="Muzny D.M."/>
            <person name="Mourier T."/>
            <person name="Pain A."/>
            <person name="Lu M."/>
            <person name="Harper D."/>
            <person name="Lindsay R."/>
            <person name="Hauser H."/>
            <person name="James K.D."/>
            <person name="Quiles M."/>
            <person name="Madan Babu M."/>
            <person name="Saito T."/>
            <person name="Buchrieser C."/>
            <person name="Wardroper A."/>
            <person name="Felder M."/>
            <person name="Thangavelu M."/>
            <person name="Johnson D."/>
            <person name="Knights A."/>
            <person name="Loulseged H."/>
            <person name="Mungall K.L."/>
            <person name="Oliver K."/>
            <person name="Price C."/>
            <person name="Quail M.A."/>
            <person name="Urushihara H."/>
            <person name="Hernandez J."/>
            <person name="Rabbinowitsch E."/>
            <person name="Steffen D."/>
            <person name="Sanders M."/>
            <person name="Ma J."/>
            <person name="Kohara Y."/>
            <person name="Sharp S."/>
            <person name="Simmonds M.N."/>
            <person name="Spiegler S."/>
            <person name="Tivey A."/>
            <person name="Sugano S."/>
            <person name="White B."/>
            <person name="Walker D."/>
            <person name="Woodward J.R."/>
            <person name="Winckler T."/>
            <person name="Tanaka Y."/>
            <person name="Shaulsky G."/>
            <person name="Schleicher M."/>
            <person name="Weinstock G.M."/>
            <person name="Rosenthal A."/>
            <person name="Cox E.C."/>
            <person name="Chisholm R.L."/>
            <person name="Gibbs R.A."/>
            <person name="Loomis W.F."/>
            <person name="Platzer M."/>
            <person name="Kay R.R."/>
            <person name="Williams J.G."/>
            <person name="Dear P.H."/>
            <person name="Noegel A.A."/>
            <person name="Barrell B.G."/>
            <person name="Kuspa A."/>
        </authorList>
    </citation>
    <scope>NUCLEOTIDE SEQUENCE [LARGE SCALE GENOMIC DNA]</scope>
    <source>
        <strain>AX4</strain>
    </source>
</reference>
<reference key="3">
    <citation type="journal article" date="2002" name="EMBO J.">
        <title>A novel cGMP signalling pathway mediating myosin phosphorylation and chemotaxis in Dictyostelium.</title>
        <authorList>
            <person name="Bosgraaf L."/>
            <person name="Russcher H."/>
            <person name="Smith J.L."/>
            <person name="Wessels D."/>
            <person name="Soll D.R."/>
            <person name="Van Haastert P.J.M."/>
        </authorList>
    </citation>
    <scope>FUNCTION</scope>
</reference>
<reference key="4">
    <citation type="journal article" date="2005" name="Genome Biol.">
        <title>The Dictyostelium genome encodes numerous RasGEFs with multiple biological roles.</title>
        <authorList>
            <person name="Wilkins A."/>
            <person name="Szafranski K."/>
            <person name="Fraser D.J."/>
            <person name="Bakthavatsalam D."/>
            <person name="Mueller R."/>
            <person name="Fisher P.R."/>
            <person name="Gloeckner G."/>
            <person name="Eichinger L."/>
            <person name="Noegel A.A."/>
            <person name="Insall R.H."/>
        </authorList>
    </citation>
    <scope>DEVELOPMENTAL STAGE</scope>
</reference>
<reference key="5">
    <citation type="journal article" date="2005" name="J. Cell Sci.">
        <title>RasGEF-containing proteins GbpC and GbpD have differential effects on cell polarity and chemotaxis in Dictyostelium.</title>
        <authorList>
            <person name="Bosgraaf L."/>
            <person name="Waijer A."/>
            <person name="Engel R."/>
            <person name="Visser A.J.W.G."/>
            <person name="Wessels D."/>
            <person name="Soll D."/>
            <person name="van Haastert P.J.M."/>
        </authorList>
    </citation>
    <scope>FUNCTION</scope>
</reference>
<reference key="6">
    <citation type="journal article" date="2006" name="FEBS Lett.">
        <title>Myosin light chain kinase A is activated by cGMP-dependent and cGMP-independent pathways.</title>
        <authorList>
            <person name="Goldberg J.M."/>
            <person name="Wolpin E.S."/>
            <person name="Bosgraaf L."/>
            <person name="Clarkson B.K."/>
            <person name="Van Haastert P.J.M."/>
            <person name="Smith J.L."/>
        </authorList>
    </citation>
    <scope>FUNCTION</scope>
</reference>
<reference key="7">
    <citation type="journal article" date="2008" name="J. Biol. Chem.">
        <title>Intramolecular activation mechanism of the dictyostelium LRRK2-homolog Roco protein GbpC.</title>
        <authorList>
            <person name="van Egmond W.N."/>
            <person name="Kortholt A."/>
            <person name="Plak K."/>
            <person name="Bosgraaf L."/>
            <person name="Bosgraaf S."/>
            <person name="Keizer-Gunnink I."/>
            <person name="van Haastert P.J.M."/>
        </authorList>
    </citation>
    <scope>FUNCTION</scope>
    <scope>MUTAGENESIS OF LYS-342 AND LYS-905</scope>
</reference>
<reference key="8">
    <citation type="journal article" date="2008" name="J. Cell Biol.">
        <title>Four key signaling pathways mediating chemotaxis in Dictyostelium discoideum.</title>
        <authorList>
            <person name="Veltman D.M."/>
            <person name="Keizer-Gunnik I."/>
            <person name="Van Haastert P.J.M."/>
        </authorList>
    </citation>
    <scope>FUNCTION</scope>
</reference>
<dbReference type="EC" id="2.7.11.1"/>
<dbReference type="EMBL" id="AF481923">
    <property type="protein sequence ID" value="AAM34041.1"/>
    <property type="molecule type" value="Genomic_DNA"/>
</dbReference>
<dbReference type="EMBL" id="AAFI02000175">
    <property type="protein sequence ID" value="EAL61887.1"/>
    <property type="molecule type" value="Genomic_DNA"/>
</dbReference>
<dbReference type="RefSeq" id="XP_635392.1">
    <property type="nucleotide sequence ID" value="XM_630300.1"/>
</dbReference>
<dbReference type="SMR" id="Q8MVR1"/>
<dbReference type="FunCoup" id="Q8MVR1">
    <property type="interactions" value="75"/>
</dbReference>
<dbReference type="STRING" id="44689.Q8MVR1"/>
<dbReference type="PaxDb" id="44689-DDB0191359"/>
<dbReference type="EnsemblProtists" id="EAL61887">
    <property type="protein sequence ID" value="EAL61887"/>
    <property type="gene ID" value="DDB_G0291079"/>
</dbReference>
<dbReference type="GeneID" id="8627976"/>
<dbReference type="KEGG" id="ddi:DDB_G0291079"/>
<dbReference type="dictyBase" id="DDB_G0291079">
    <property type="gene designation" value="gbpC"/>
</dbReference>
<dbReference type="VEuPathDB" id="AmoebaDB:DDB_G0291079"/>
<dbReference type="eggNOG" id="KOG0192">
    <property type="taxonomic scope" value="Eukaryota"/>
</dbReference>
<dbReference type="eggNOG" id="KOG0619">
    <property type="taxonomic scope" value="Eukaryota"/>
</dbReference>
<dbReference type="eggNOG" id="KOG3417">
    <property type="taxonomic scope" value="Eukaryota"/>
</dbReference>
<dbReference type="HOGENOM" id="CLU_227708_0_0_1"/>
<dbReference type="InParanoid" id="Q8MVR1"/>
<dbReference type="OMA" id="MLPESNY"/>
<dbReference type="PRO" id="PR:Q8MVR1"/>
<dbReference type="Proteomes" id="UP000002195">
    <property type="component" value="Chromosome 5"/>
</dbReference>
<dbReference type="GO" id="GO:0005938">
    <property type="term" value="C:cell cortex"/>
    <property type="evidence" value="ECO:0000314"/>
    <property type="project" value="dictyBase"/>
</dbReference>
<dbReference type="GO" id="GO:0031252">
    <property type="term" value="C:cell leading edge"/>
    <property type="evidence" value="ECO:0000314"/>
    <property type="project" value="dictyBase"/>
</dbReference>
<dbReference type="GO" id="GO:0005737">
    <property type="term" value="C:cytoplasm"/>
    <property type="evidence" value="ECO:0000314"/>
    <property type="project" value="dictyBase"/>
</dbReference>
<dbReference type="GO" id="GO:0005886">
    <property type="term" value="C:plasma membrane"/>
    <property type="evidence" value="ECO:0000315"/>
    <property type="project" value="dictyBase"/>
</dbReference>
<dbReference type="GO" id="GO:0005524">
    <property type="term" value="F:ATP binding"/>
    <property type="evidence" value="ECO:0007669"/>
    <property type="project" value="UniProtKB-KW"/>
</dbReference>
<dbReference type="GO" id="GO:0030553">
    <property type="term" value="F:cGMP binding"/>
    <property type="evidence" value="ECO:0000314"/>
    <property type="project" value="dictyBase"/>
</dbReference>
<dbReference type="GO" id="GO:0005525">
    <property type="term" value="F:GTP binding"/>
    <property type="evidence" value="ECO:0000314"/>
    <property type="project" value="dictyBase"/>
</dbReference>
<dbReference type="GO" id="GO:0005085">
    <property type="term" value="F:guanyl-nucleotide exchange factor activity"/>
    <property type="evidence" value="ECO:0000314"/>
    <property type="project" value="dictyBase"/>
</dbReference>
<dbReference type="GO" id="GO:0005543">
    <property type="term" value="F:phospholipid binding"/>
    <property type="evidence" value="ECO:0000314"/>
    <property type="project" value="dictyBase"/>
</dbReference>
<dbReference type="GO" id="GO:0004672">
    <property type="term" value="F:protein kinase activity"/>
    <property type="evidence" value="ECO:0000318"/>
    <property type="project" value="GO_Central"/>
</dbReference>
<dbReference type="GO" id="GO:0019887">
    <property type="term" value="F:protein kinase regulator activity"/>
    <property type="evidence" value="ECO:0000315"/>
    <property type="project" value="dictyBase"/>
</dbReference>
<dbReference type="GO" id="GO:0106310">
    <property type="term" value="F:protein serine kinase activity"/>
    <property type="evidence" value="ECO:0007669"/>
    <property type="project" value="RHEA"/>
</dbReference>
<dbReference type="GO" id="GO:0004674">
    <property type="term" value="F:protein serine/threonine kinase activity"/>
    <property type="evidence" value="ECO:0007669"/>
    <property type="project" value="UniProtKB-KW"/>
</dbReference>
<dbReference type="GO" id="GO:0032060">
    <property type="term" value="P:bleb assembly"/>
    <property type="evidence" value="ECO:0000316"/>
    <property type="project" value="dictyBase"/>
</dbReference>
<dbReference type="GO" id="GO:0031589">
    <property type="term" value="P:cell-substrate adhesion"/>
    <property type="evidence" value="ECO:0000315"/>
    <property type="project" value="dictyBase"/>
</dbReference>
<dbReference type="GO" id="GO:0019934">
    <property type="term" value="P:cGMP-mediated signaling"/>
    <property type="evidence" value="ECO:0000314"/>
    <property type="project" value="dictyBase"/>
</dbReference>
<dbReference type="GO" id="GO:0007163">
    <property type="term" value="P:establishment or maintenance of cell polarity"/>
    <property type="evidence" value="ECO:0000315"/>
    <property type="project" value="dictyBase"/>
</dbReference>
<dbReference type="GO" id="GO:0046579">
    <property type="term" value="P:positive regulation of Ras protein signal transduction"/>
    <property type="evidence" value="ECO:0000314"/>
    <property type="project" value="dictyBase"/>
</dbReference>
<dbReference type="GO" id="GO:0050920">
    <property type="term" value="P:regulation of chemotaxis"/>
    <property type="evidence" value="ECO:0000315"/>
    <property type="project" value="dictyBase"/>
</dbReference>
<dbReference type="GO" id="GO:0051602">
    <property type="term" value="P:response to electrical stimulus"/>
    <property type="evidence" value="ECO:0000315"/>
    <property type="project" value="dictyBase"/>
</dbReference>
<dbReference type="GO" id="GO:0007165">
    <property type="term" value="P:signal transduction"/>
    <property type="evidence" value="ECO:0000318"/>
    <property type="project" value="GO_Central"/>
</dbReference>
<dbReference type="GO" id="GO:0007264">
    <property type="term" value="P:small GTPase-mediated signal transduction"/>
    <property type="evidence" value="ECO:0007669"/>
    <property type="project" value="InterPro"/>
</dbReference>
<dbReference type="CDD" id="cd00038">
    <property type="entry name" value="CAP_ED"/>
    <property type="match status" value="2"/>
</dbReference>
<dbReference type="CDD" id="cd04371">
    <property type="entry name" value="DEP"/>
    <property type="match status" value="1"/>
</dbReference>
<dbReference type="CDD" id="cd06224">
    <property type="entry name" value="REM"/>
    <property type="match status" value="1"/>
</dbReference>
<dbReference type="CDD" id="cd13999">
    <property type="entry name" value="STKc_MAP3K-like"/>
    <property type="match status" value="1"/>
</dbReference>
<dbReference type="FunFam" id="1.20.870.10:FF:000037">
    <property type="entry name" value="Cyclic GMP-binding protein D"/>
    <property type="match status" value="1"/>
</dbReference>
<dbReference type="FunFam" id="2.30.29.30:FF:000927">
    <property type="entry name" value="Cyclic GMP-binding protein D"/>
    <property type="match status" value="1"/>
</dbReference>
<dbReference type="FunFam" id="1.10.510.10:FF:002127">
    <property type="entry name" value="Probable serine/threonine-protein kinase pats1"/>
    <property type="match status" value="1"/>
</dbReference>
<dbReference type="FunFam" id="3.30.200.20:FF:000803">
    <property type="entry name" value="Probable serine/threonine-protein kinase roco4"/>
    <property type="match status" value="1"/>
</dbReference>
<dbReference type="Gene3D" id="3.30.310.200">
    <property type="match status" value="1"/>
</dbReference>
<dbReference type="Gene3D" id="2.60.120.10">
    <property type="entry name" value="Jelly Rolls"/>
    <property type="match status" value="2"/>
</dbReference>
<dbReference type="Gene3D" id="3.40.50.300">
    <property type="entry name" value="P-loop containing nucleotide triphosphate hydrolases"/>
    <property type="match status" value="1"/>
</dbReference>
<dbReference type="Gene3D" id="3.30.200.20">
    <property type="entry name" value="Phosphorylase Kinase, domain 1"/>
    <property type="match status" value="1"/>
</dbReference>
<dbReference type="Gene3D" id="2.30.29.30">
    <property type="entry name" value="Pleckstrin-homology domain (PH domain)/Phosphotyrosine-binding domain (PTB)"/>
    <property type="match status" value="1"/>
</dbReference>
<dbReference type="Gene3D" id="1.10.840.10">
    <property type="entry name" value="Ras guanine-nucleotide exchange factors catalytic domain"/>
    <property type="match status" value="1"/>
</dbReference>
<dbReference type="Gene3D" id="3.80.10.10">
    <property type="entry name" value="Ribonuclease Inhibitor"/>
    <property type="match status" value="1"/>
</dbReference>
<dbReference type="Gene3D" id="3.30.70.1390">
    <property type="entry name" value="ROC domain from the Parkinson's disease-associated leucine-rich repeat kinase 2"/>
    <property type="match status" value="1"/>
</dbReference>
<dbReference type="Gene3D" id="1.20.870.10">
    <property type="entry name" value="Son of sevenless (SoS) protein Chain: S domain 1"/>
    <property type="match status" value="1"/>
</dbReference>
<dbReference type="Gene3D" id="1.10.510.10">
    <property type="entry name" value="Transferase(Phosphotransferase) domain 1"/>
    <property type="match status" value="1"/>
</dbReference>
<dbReference type="Gene3D" id="1.10.10.10">
    <property type="entry name" value="Winged helix-like DNA-binding domain superfamily/Winged helix DNA-binding domain"/>
    <property type="match status" value="2"/>
</dbReference>
<dbReference type="InterPro" id="IPR000595">
    <property type="entry name" value="cNMP-bd_dom"/>
</dbReference>
<dbReference type="InterPro" id="IPR018490">
    <property type="entry name" value="cNMP-bd_dom_sf"/>
</dbReference>
<dbReference type="InterPro" id="IPR032171">
    <property type="entry name" value="COR-A"/>
</dbReference>
<dbReference type="InterPro" id="IPR000591">
    <property type="entry name" value="DEP_dom"/>
</dbReference>
<dbReference type="InterPro" id="IPR004182">
    <property type="entry name" value="GRAM"/>
</dbReference>
<dbReference type="InterPro" id="IPR011009">
    <property type="entry name" value="Kinase-like_dom_sf"/>
</dbReference>
<dbReference type="InterPro" id="IPR001611">
    <property type="entry name" value="Leu-rich_rpt"/>
</dbReference>
<dbReference type="InterPro" id="IPR003591">
    <property type="entry name" value="Leu-rich_rpt_typical-subtyp"/>
</dbReference>
<dbReference type="InterPro" id="IPR032675">
    <property type="entry name" value="LRR_dom_sf"/>
</dbReference>
<dbReference type="InterPro" id="IPR055414">
    <property type="entry name" value="LRR_R13L4/SHOC2-like"/>
</dbReference>
<dbReference type="InterPro" id="IPR027417">
    <property type="entry name" value="P-loop_NTPase"/>
</dbReference>
<dbReference type="InterPro" id="IPR011993">
    <property type="entry name" value="PH-like_dom_sf"/>
</dbReference>
<dbReference type="InterPro" id="IPR000719">
    <property type="entry name" value="Prot_kinase_dom"/>
</dbReference>
<dbReference type="InterPro" id="IPR017441">
    <property type="entry name" value="Protein_kinase_ATP_BS"/>
</dbReference>
<dbReference type="InterPro" id="IPR000651">
    <property type="entry name" value="Ras-like_Gua-exchang_fac_N"/>
</dbReference>
<dbReference type="InterPro" id="IPR023578">
    <property type="entry name" value="Ras_GEF_dom_sf"/>
</dbReference>
<dbReference type="InterPro" id="IPR001895">
    <property type="entry name" value="RASGEF_cat_dom"/>
</dbReference>
<dbReference type="InterPro" id="IPR036964">
    <property type="entry name" value="RASGEF_cat_dom_sf"/>
</dbReference>
<dbReference type="InterPro" id="IPR014710">
    <property type="entry name" value="RmlC-like_jellyroll"/>
</dbReference>
<dbReference type="InterPro" id="IPR020859">
    <property type="entry name" value="ROC"/>
</dbReference>
<dbReference type="InterPro" id="IPR001245">
    <property type="entry name" value="Ser-Thr/Tyr_kinase_cat_dom"/>
</dbReference>
<dbReference type="InterPro" id="IPR008271">
    <property type="entry name" value="Ser/Thr_kinase_AS"/>
</dbReference>
<dbReference type="InterPro" id="IPR051681">
    <property type="entry name" value="Ser/Thr_Kinases-Pseudokinases"/>
</dbReference>
<dbReference type="InterPro" id="IPR036388">
    <property type="entry name" value="WH-like_DNA-bd_sf"/>
</dbReference>
<dbReference type="InterPro" id="IPR036390">
    <property type="entry name" value="WH_DNA-bd_sf"/>
</dbReference>
<dbReference type="PANTHER" id="PTHR44329:SF288">
    <property type="entry name" value="MITOGEN-ACTIVATED PROTEIN KINASE KINASE KINASE 20"/>
    <property type="match status" value="1"/>
</dbReference>
<dbReference type="PANTHER" id="PTHR44329">
    <property type="entry name" value="SERINE/THREONINE-PROTEIN KINASE TNNI3K-RELATED"/>
    <property type="match status" value="1"/>
</dbReference>
<dbReference type="Pfam" id="PF00027">
    <property type="entry name" value="cNMP_binding"/>
    <property type="match status" value="2"/>
</dbReference>
<dbReference type="Pfam" id="PF16095">
    <property type="entry name" value="COR-A"/>
    <property type="match status" value="1"/>
</dbReference>
<dbReference type="Pfam" id="PF25497">
    <property type="entry name" value="COR-B"/>
    <property type="match status" value="1"/>
</dbReference>
<dbReference type="Pfam" id="PF00610">
    <property type="entry name" value="DEP"/>
    <property type="match status" value="1"/>
</dbReference>
<dbReference type="Pfam" id="PF02893">
    <property type="entry name" value="GRAM"/>
    <property type="match status" value="1"/>
</dbReference>
<dbReference type="Pfam" id="PF23598">
    <property type="entry name" value="LRR_14"/>
    <property type="match status" value="1"/>
</dbReference>
<dbReference type="Pfam" id="PF07714">
    <property type="entry name" value="PK_Tyr_Ser-Thr"/>
    <property type="match status" value="1"/>
</dbReference>
<dbReference type="Pfam" id="PF00617">
    <property type="entry name" value="RasGEF"/>
    <property type="match status" value="1"/>
</dbReference>
<dbReference type="Pfam" id="PF00618">
    <property type="entry name" value="RasGEF_N"/>
    <property type="match status" value="1"/>
</dbReference>
<dbReference type="Pfam" id="PF08477">
    <property type="entry name" value="Roc"/>
    <property type="match status" value="1"/>
</dbReference>
<dbReference type="PRINTS" id="PR00449">
    <property type="entry name" value="RASTRNSFRMNG"/>
</dbReference>
<dbReference type="PRINTS" id="PR00109">
    <property type="entry name" value="TYRKINASE"/>
</dbReference>
<dbReference type="SMART" id="SM00049">
    <property type="entry name" value="DEP"/>
    <property type="match status" value="1"/>
</dbReference>
<dbReference type="SMART" id="SM00568">
    <property type="entry name" value="GRAM"/>
    <property type="match status" value="1"/>
</dbReference>
<dbReference type="SMART" id="SM00364">
    <property type="entry name" value="LRR_BAC"/>
    <property type="match status" value="4"/>
</dbReference>
<dbReference type="SMART" id="SM00369">
    <property type="entry name" value="LRR_TYP"/>
    <property type="match status" value="2"/>
</dbReference>
<dbReference type="SMART" id="SM00147">
    <property type="entry name" value="RasGEF"/>
    <property type="match status" value="1"/>
</dbReference>
<dbReference type="SMART" id="SM00220">
    <property type="entry name" value="S_TKc"/>
    <property type="match status" value="1"/>
</dbReference>
<dbReference type="SUPFAM" id="SSF51206">
    <property type="entry name" value="cAMP-binding domain-like"/>
    <property type="match status" value="2"/>
</dbReference>
<dbReference type="SUPFAM" id="SSF52058">
    <property type="entry name" value="L domain-like"/>
    <property type="match status" value="1"/>
</dbReference>
<dbReference type="SUPFAM" id="SSF52540">
    <property type="entry name" value="P-loop containing nucleoside triphosphate hydrolases"/>
    <property type="match status" value="1"/>
</dbReference>
<dbReference type="SUPFAM" id="SSF56112">
    <property type="entry name" value="Protein kinase-like (PK-like)"/>
    <property type="match status" value="1"/>
</dbReference>
<dbReference type="SUPFAM" id="SSF48366">
    <property type="entry name" value="Ras GEF"/>
    <property type="match status" value="1"/>
</dbReference>
<dbReference type="SUPFAM" id="SSF46785">
    <property type="entry name" value="Winged helix' DNA-binding domain"/>
    <property type="match status" value="1"/>
</dbReference>
<dbReference type="PROSITE" id="PS50042">
    <property type="entry name" value="CNMP_BINDING_3"/>
    <property type="match status" value="2"/>
</dbReference>
<dbReference type="PROSITE" id="PS50186">
    <property type="entry name" value="DEP"/>
    <property type="match status" value="1"/>
</dbReference>
<dbReference type="PROSITE" id="PS51450">
    <property type="entry name" value="LRR"/>
    <property type="match status" value="4"/>
</dbReference>
<dbReference type="PROSITE" id="PS00107">
    <property type="entry name" value="PROTEIN_KINASE_ATP"/>
    <property type="match status" value="1"/>
</dbReference>
<dbReference type="PROSITE" id="PS50011">
    <property type="entry name" value="PROTEIN_KINASE_DOM"/>
    <property type="match status" value="1"/>
</dbReference>
<dbReference type="PROSITE" id="PS00108">
    <property type="entry name" value="PROTEIN_KINASE_ST"/>
    <property type="match status" value="1"/>
</dbReference>
<dbReference type="PROSITE" id="PS50009">
    <property type="entry name" value="RASGEF_CAT"/>
    <property type="match status" value="1"/>
</dbReference>
<dbReference type="PROSITE" id="PS50212">
    <property type="entry name" value="RASGEF_NTER"/>
    <property type="match status" value="1"/>
</dbReference>
<dbReference type="PROSITE" id="PS51424">
    <property type="entry name" value="ROC"/>
    <property type="match status" value="1"/>
</dbReference>
<sequence length="2631" mass="294127">MSQKQKPIRFQDYQFTATKDEAYGRSDRYVKQFLNKNLLKKKDGTLGTAEELLTLIQQSNINVVTASTGGAAMGAMLNHTVSTINLTGSGSVPTYNPSDNRNSGSHVITSTNSVISNSSISSTGVINNNINNNSNINSNTGTTTTTISLPNNTEIKTALVSTGSQNASDTAQIDIEFHLSYTQLVTLPPSIFSLIWIQKLVLTHHNIKTLSEDIGKLQQLQVLVLENNRLINLPQSIGDLVNLKRLEVDNNHLVSLCSLERLSKLEVLSVNNNKLTLLPTSIASLSSLKTLNIKSNPIITPPSTVVSKGLKDIVSFLRELETGARPCLRSKLVVLGDPGVGKTSVVQCMKGKKKKTNVTSSSINIGGSSGSEVGIEIDQYDFDVVFDEDDKKRRVITLSTWDIANQDVYFASSQLFDSERSVYIVVFNLNNDDFSAIEYWLHCIMSTSPNSPIVLVGTHIDAFENLNVVNAVLESVASRFQKRFTNIQAIISVSCTTGYDVDKLRQLIEDIIKTQPYLKEKVPSSFFTLEEALIEVKKKRIPPVMMWQEYINLANICNLKDSVQIQRATEFLHNIGSIVYFNDLNSSTVGKMVILDQQWIINCMSSLITSKLLINNCNGIVRQSDLELVWKAPTYPEHLHPALLSIMQAFEICRSLSPSDLVRPEEVNEKEVMGDRNLVPNLLSDNTNIVAQWDDFIDPDTILLNRQYHLPFLPEKFFGKLIIHLMNFTKVESCQKRAVILRNQDNHEALIELKTIKDNKDGTFKKILTVDVRGLVSPVSLLRIVTDTIESLFSQWYKLDIKRYISCYECAILYDRNPTLFTIEECELAVIDGKTVLTCNQKSDSDRVSTSHRLKLDILAPDISMVDIPIPRFNLSEVKINKEVGRGAFGIVYEAEWMSEWIALKKLLLPSSTDTTNLNGNGEVMVYDDPDQLIEDRLRVFREFRHEVYYMSGLNHPNVMKISGFCIQPLCMALEYVRYGSLYSLLSNSSIEISWGLRLQIASEIAKGMQHLHSHNPPVIHRDLKSPNILLNGITEGQNSVATIIDFGTSTALYGGAALIRCVDQPLWLGPEVLAGTAYSEPSDVYSFGIILWELYTRAHPFDEFQFGQWMSKLEDEIIRGLRPTIPPTCPPEYVELIQSCWTHEPNSRPTFTSIVEILGQIKKKFAPLPFTHPPHIRNMMRKSRSSSISEAMLPSNLLHLNLNGINNNNNNSNNNNNSIPVTTISLTSSGTSPTNSPVGGLLSQSLTQPITSGGSTSGILSTSVNRDNSSLVSASSLGNNTSTSSLASLVSNNSGLHHSPSASDGLNDYYGADNNNNNNDSTMDFFQDIFTEEENEQPYPFADDDQQKGILFGFDEEQTNPSASSVSIIIAATMAKMIEMMTKGESSATLKSEHISTRRRSDTAGKNGVPPHWRNSVPLSTNSSTTLDETFIDDFIYVYRSFTTPRNIFKLLVRRFFGPRHTDKVDTFTIKKFEQKKAAIRQGIAVFLRKWVADITELEFRQEEFWLYHNTVAFTKQFIASEFPTIATQIYGTLTTHEDEVNLTNQRFLQIAFSESEIQIDRAMSSMQLTTPKPFRSQKNLANSYNSQSGGGDSSFYYQPSSNDVSRVFLNLATGMRDPLLGITVKEKKFKKDKVSTLCCSGSEIIDWITKCMPIKREEASILVLDMLMKQFFIQISDDGIPISNQKGTNPTFSDSPTSFYMFLEDDPELIARQYTFLELKYLQNIHPRELLGFSVGLVMPNENEKDPEKWRQSNFPHIYDYFRWFNKMTMLVSTEILRQRDIKQRASIIEKYISIALEYLSLWNFNGIMQVLSSLHSEPISRLSATWAKVSQRSMDCFYELSRLMLPESNYLPLRTALASQKPNTIIQASPLYPNISAYMVHTVCPTIPFLGALIADLSQTCTENPTFISSGGEKMINILRVKRLSKKMKMFKEYKEMPTQYLPALTTIPLQYYEHYVNDLKALDSLQIDRLSDIERKLEIICEKNGTTNDDKEKGDENGGGLTSSNFFGNGSDELTERDWTILLTNASVIAYNRGDVVMEENAINTHLYRIKSGAISVEKKDKEGINCKVATMFAPKMFGEMSFLGNKTTARLTVDEESDLYVMDIPFLNNLFNGHPRLGAKFYKIMANQLAIRLKNLPWSKPKNTTGGSSSSNQSAGPDNILGTTPTGISSSGGGLTSLLNQNLSSIMSLSNSNTPPASPRVMTTPTLPSPPAPLQSPPTSGISSPTTTTSTTTDQQKINNTIFQNVHPTINVHRTSSSANLVSPHGRPSNSGFGHSSGGERTINKDPHQRDSGSMDKPILSLGSGGTPRGDGARSGSISYLGRTQTSTSPLNEGLSGGQQPVMKKNDQEFCQRFALVDEIVIKDYPCSLNRSGRLYISQQHVCFYSKFFGYKTKKVIPFKNIDKLICINVNQIELTRLKNTVPSNYRLTFQTGKDREDAFSMIHILWDSSKVSNSSSDEIKNKLAAERKKVNNLTLKTRSNKNKGDELTKEDWELIGCEGSRSSTFKKDEVIIREGERMQKIFQIGKGVCRIEKSVPVAPGSSEMKKVVLGTMKQDDTFGEITYLLNGETTADVIADTDQTEVYTIEGQFVNILFDLNPALASKWFKYLATALNKTLIERESQLYA</sequence>
<gene>
    <name type="primary">gbpC</name>
    <name type="synonym">gefT</name>
    <name type="synonym">rasGEFT</name>
    <name type="ORF">DDB_G0291079</name>
</gene>
<accession>Q8MVR1</accession>
<accession>Q54F62</accession>